<evidence type="ECO:0000255" key="1">
    <source>
        <dbReference type="HAMAP-Rule" id="MF_00338"/>
    </source>
</evidence>
<reference key="1">
    <citation type="journal article" date="2007" name="J. Bacteriol.">
        <title>The genome sequence of avian pathogenic Escherichia coli strain O1:K1:H7 shares strong similarities with human extraintestinal pathogenic E. coli genomes.</title>
        <authorList>
            <person name="Johnson T.J."/>
            <person name="Kariyawasam S."/>
            <person name="Wannemuehler Y."/>
            <person name="Mangiamele P."/>
            <person name="Johnson S.J."/>
            <person name="Doetkott C."/>
            <person name="Skyberg J.A."/>
            <person name="Lynne A.M."/>
            <person name="Johnson J.R."/>
            <person name="Nolan L.K."/>
        </authorList>
    </citation>
    <scope>NUCLEOTIDE SEQUENCE [LARGE SCALE GENOMIC DNA]</scope>
</reference>
<keyword id="KW-1185">Reference proteome</keyword>
<name>YBJQ_ECOK1</name>
<protein>
    <recommendedName>
        <fullName evidence="1">UPF0145 protein YbjQ</fullName>
    </recommendedName>
</protein>
<feature type="chain" id="PRO_1000012993" description="UPF0145 protein YbjQ">
    <location>
        <begin position="1"/>
        <end position="107"/>
    </location>
</feature>
<gene>
    <name evidence="1" type="primary">ybjQ</name>
    <name type="ordered locus">Ecok1_07510</name>
    <name type="ORF">APECO1_1227</name>
</gene>
<proteinExistence type="inferred from homology"/>
<comment type="similarity">
    <text evidence="1">Belongs to the UPF0145 family.</text>
</comment>
<accession>A1A9A5</accession>
<sequence>MQFSTTPTLEGQTIVEYCGVVTGEAILGANIFRDFFAGIRDIVGGRSGAYEKELRKAREIAFEELGSQARALGADAVVGIDIDYETVGQNGSMLMVSVSGTAVKTRR</sequence>
<dbReference type="EMBL" id="CP000468">
    <property type="protein sequence ID" value="ABJ00245.1"/>
    <property type="molecule type" value="Genomic_DNA"/>
</dbReference>
<dbReference type="RefSeq" id="WP_001160737.1">
    <property type="nucleotide sequence ID" value="NZ_CADILS010000017.1"/>
</dbReference>
<dbReference type="SMR" id="A1A9A5"/>
<dbReference type="KEGG" id="ecv:APECO1_1227"/>
<dbReference type="HOGENOM" id="CLU_117144_3_0_6"/>
<dbReference type="Proteomes" id="UP000008216">
    <property type="component" value="Chromosome"/>
</dbReference>
<dbReference type="Gene3D" id="3.30.110.70">
    <property type="entry name" value="Hypothetical protein apc22750. Chain B"/>
    <property type="match status" value="1"/>
</dbReference>
<dbReference type="HAMAP" id="MF_00338">
    <property type="entry name" value="UPF0145"/>
    <property type="match status" value="1"/>
</dbReference>
<dbReference type="InterPro" id="IPR035439">
    <property type="entry name" value="UPF0145_dom_sf"/>
</dbReference>
<dbReference type="InterPro" id="IPR002765">
    <property type="entry name" value="UPF0145_YbjQ-like"/>
</dbReference>
<dbReference type="NCBIfam" id="NF002776">
    <property type="entry name" value="PRK02877.1"/>
    <property type="match status" value="1"/>
</dbReference>
<dbReference type="PANTHER" id="PTHR34068">
    <property type="entry name" value="UPF0145 PROTEIN YBJQ"/>
    <property type="match status" value="1"/>
</dbReference>
<dbReference type="PANTHER" id="PTHR34068:SF1">
    <property type="entry name" value="UPF0145 PROTEIN YBJQ"/>
    <property type="match status" value="1"/>
</dbReference>
<dbReference type="Pfam" id="PF01906">
    <property type="entry name" value="YbjQ_1"/>
    <property type="match status" value="1"/>
</dbReference>
<dbReference type="SUPFAM" id="SSF117782">
    <property type="entry name" value="YbjQ-like"/>
    <property type="match status" value="1"/>
</dbReference>
<organism>
    <name type="scientific">Escherichia coli O1:K1 / APEC</name>
    <dbReference type="NCBI Taxonomy" id="405955"/>
    <lineage>
        <taxon>Bacteria</taxon>
        <taxon>Pseudomonadati</taxon>
        <taxon>Pseudomonadota</taxon>
        <taxon>Gammaproteobacteria</taxon>
        <taxon>Enterobacterales</taxon>
        <taxon>Enterobacteriaceae</taxon>
        <taxon>Escherichia</taxon>
    </lineage>
</organism>